<keyword id="KW-0025">Alternative splicing</keyword>
<keyword id="KW-1185">Reference proteome</keyword>
<proteinExistence type="evidence at transcript level"/>
<accession>P59278</accession>
<accession>F4I9N2</accession>
<accession>Q9C8I2</accession>
<dbReference type="EMBL" id="AC025294">
    <property type="protein sequence ID" value="AAG50888.1"/>
    <property type="status" value="ALT_SEQ"/>
    <property type="molecule type" value="Genomic_DNA"/>
</dbReference>
<dbReference type="EMBL" id="CP002684">
    <property type="status" value="NOT_ANNOTATED_CDS"/>
    <property type="molecule type" value="Genomic_DNA"/>
</dbReference>
<dbReference type="EMBL" id="BT002989">
    <property type="protein sequence ID" value="AAO22798.1"/>
    <property type="molecule type" value="mRNA"/>
</dbReference>
<dbReference type="STRING" id="3702.P59278"/>
<dbReference type="iPTMnet" id="P59278"/>
<dbReference type="PaxDb" id="3702-AT1G51745.1"/>
<dbReference type="ProteomicsDB" id="242425">
    <molecule id="P59278-1"/>
</dbReference>
<dbReference type="Araport" id="AT1G51745"/>
<dbReference type="TAIR" id="AT1G51745">
    <property type="gene designation" value="SL1"/>
</dbReference>
<dbReference type="eggNOG" id="ENOG502QUJY">
    <property type="taxonomic scope" value="Eukaryota"/>
</dbReference>
<dbReference type="HOGENOM" id="CLU_014737_1_0_1"/>
<dbReference type="InParanoid" id="P59278"/>
<dbReference type="PRO" id="PR:P59278"/>
<dbReference type="Proteomes" id="UP000006548">
    <property type="component" value="Chromosome 1"/>
</dbReference>
<dbReference type="ExpressionAtlas" id="P59278">
    <property type="expression patterns" value="baseline and differential"/>
</dbReference>
<dbReference type="CDD" id="cd05162">
    <property type="entry name" value="PWWP"/>
    <property type="match status" value="1"/>
</dbReference>
<dbReference type="Gene3D" id="2.30.30.140">
    <property type="match status" value="1"/>
</dbReference>
<dbReference type="InterPro" id="IPR044679">
    <property type="entry name" value="PWWP2-like"/>
</dbReference>
<dbReference type="InterPro" id="IPR000313">
    <property type="entry name" value="PWWP_dom"/>
</dbReference>
<dbReference type="PANTHER" id="PTHR33697:SF4">
    <property type="entry name" value="PWWP DOMAIN-CONTAINING PROTEIN"/>
    <property type="match status" value="1"/>
</dbReference>
<dbReference type="PANTHER" id="PTHR33697">
    <property type="entry name" value="T17B22.17 PROTEIN-RELATED"/>
    <property type="match status" value="1"/>
</dbReference>
<dbReference type="Pfam" id="PF00855">
    <property type="entry name" value="PWWP"/>
    <property type="match status" value="1"/>
</dbReference>
<dbReference type="SUPFAM" id="SSF63748">
    <property type="entry name" value="Tudor/PWWP/MBT"/>
    <property type="match status" value="1"/>
</dbReference>
<dbReference type="PROSITE" id="PS50812">
    <property type="entry name" value="PWWP"/>
    <property type="match status" value="1"/>
</dbReference>
<reference key="1">
    <citation type="journal article" date="2000" name="Nature">
        <title>Sequence and analysis of chromosome 1 of the plant Arabidopsis thaliana.</title>
        <authorList>
            <person name="Theologis A."/>
            <person name="Ecker J.R."/>
            <person name="Palm C.J."/>
            <person name="Federspiel N.A."/>
            <person name="Kaul S."/>
            <person name="White O."/>
            <person name="Alonso J."/>
            <person name="Altafi H."/>
            <person name="Araujo R."/>
            <person name="Bowman C.L."/>
            <person name="Brooks S.Y."/>
            <person name="Buehler E."/>
            <person name="Chan A."/>
            <person name="Chao Q."/>
            <person name="Chen H."/>
            <person name="Cheuk R.F."/>
            <person name="Chin C.W."/>
            <person name="Chung M.K."/>
            <person name="Conn L."/>
            <person name="Conway A.B."/>
            <person name="Conway A.R."/>
            <person name="Creasy T.H."/>
            <person name="Dewar K."/>
            <person name="Dunn P."/>
            <person name="Etgu P."/>
            <person name="Feldblyum T.V."/>
            <person name="Feng J.-D."/>
            <person name="Fong B."/>
            <person name="Fujii C.Y."/>
            <person name="Gill J.E."/>
            <person name="Goldsmith A.D."/>
            <person name="Haas B."/>
            <person name="Hansen N.F."/>
            <person name="Hughes B."/>
            <person name="Huizar L."/>
            <person name="Hunter J.L."/>
            <person name="Jenkins J."/>
            <person name="Johnson-Hopson C."/>
            <person name="Khan S."/>
            <person name="Khaykin E."/>
            <person name="Kim C.J."/>
            <person name="Koo H.L."/>
            <person name="Kremenetskaia I."/>
            <person name="Kurtz D.B."/>
            <person name="Kwan A."/>
            <person name="Lam B."/>
            <person name="Langin-Hooper S."/>
            <person name="Lee A."/>
            <person name="Lee J.M."/>
            <person name="Lenz C.A."/>
            <person name="Li J.H."/>
            <person name="Li Y.-P."/>
            <person name="Lin X."/>
            <person name="Liu S.X."/>
            <person name="Liu Z.A."/>
            <person name="Luros J.S."/>
            <person name="Maiti R."/>
            <person name="Marziali A."/>
            <person name="Militscher J."/>
            <person name="Miranda M."/>
            <person name="Nguyen M."/>
            <person name="Nierman W.C."/>
            <person name="Osborne B.I."/>
            <person name="Pai G."/>
            <person name="Peterson J."/>
            <person name="Pham P.K."/>
            <person name="Rizzo M."/>
            <person name="Rooney T."/>
            <person name="Rowley D."/>
            <person name="Sakano H."/>
            <person name="Salzberg S.L."/>
            <person name="Schwartz J.R."/>
            <person name="Shinn P."/>
            <person name="Southwick A.M."/>
            <person name="Sun H."/>
            <person name="Tallon L.J."/>
            <person name="Tambunga G."/>
            <person name="Toriumi M.J."/>
            <person name="Town C.D."/>
            <person name="Utterback T."/>
            <person name="Van Aken S."/>
            <person name="Vaysberg M."/>
            <person name="Vysotskaia V.S."/>
            <person name="Walker M."/>
            <person name="Wu D."/>
            <person name="Yu G."/>
            <person name="Fraser C.M."/>
            <person name="Venter J.C."/>
            <person name="Davis R.W."/>
        </authorList>
    </citation>
    <scope>NUCLEOTIDE SEQUENCE [LARGE SCALE GENOMIC DNA]</scope>
    <source>
        <strain>cv. Columbia</strain>
    </source>
</reference>
<reference key="2">
    <citation type="journal article" date="2017" name="Plant J.">
        <title>Araport11: a complete reannotation of the Arabidopsis thaliana reference genome.</title>
        <authorList>
            <person name="Cheng C.Y."/>
            <person name="Krishnakumar V."/>
            <person name="Chan A.P."/>
            <person name="Thibaud-Nissen F."/>
            <person name="Schobel S."/>
            <person name="Town C.D."/>
        </authorList>
    </citation>
    <scope>GENOME REANNOTATION</scope>
    <source>
        <strain>cv. Columbia</strain>
    </source>
</reference>
<reference key="3">
    <citation type="journal article" date="2003" name="Science">
        <title>Empirical analysis of transcriptional activity in the Arabidopsis genome.</title>
        <authorList>
            <person name="Yamada K."/>
            <person name="Lim J."/>
            <person name="Dale J.M."/>
            <person name="Chen H."/>
            <person name="Shinn P."/>
            <person name="Palm C.J."/>
            <person name="Southwick A.M."/>
            <person name="Wu H.C."/>
            <person name="Kim C.J."/>
            <person name="Nguyen M."/>
            <person name="Pham P.K."/>
            <person name="Cheuk R.F."/>
            <person name="Karlin-Newmann G."/>
            <person name="Liu S.X."/>
            <person name="Lam B."/>
            <person name="Sakano H."/>
            <person name="Wu T."/>
            <person name="Yu G."/>
            <person name="Miranda M."/>
            <person name="Quach H.L."/>
            <person name="Tripp M."/>
            <person name="Chang C.H."/>
            <person name="Lee J.M."/>
            <person name="Toriumi M.J."/>
            <person name="Chan M.M."/>
            <person name="Tang C.C."/>
            <person name="Onodera C.S."/>
            <person name="Deng J.M."/>
            <person name="Akiyama K."/>
            <person name="Ansari Y."/>
            <person name="Arakawa T."/>
            <person name="Banh J."/>
            <person name="Banno F."/>
            <person name="Bowser L."/>
            <person name="Brooks S.Y."/>
            <person name="Carninci P."/>
            <person name="Chao Q."/>
            <person name="Choy N."/>
            <person name="Enju A."/>
            <person name="Goldsmith A.D."/>
            <person name="Gurjal M."/>
            <person name="Hansen N.F."/>
            <person name="Hayashizaki Y."/>
            <person name="Johnson-Hopson C."/>
            <person name="Hsuan V.W."/>
            <person name="Iida K."/>
            <person name="Karnes M."/>
            <person name="Khan S."/>
            <person name="Koesema E."/>
            <person name="Ishida J."/>
            <person name="Jiang P.X."/>
            <person name="Jones T."/>
            <person name="Kawai J."/>
            <person name="Kamiya A."/>
            <person name="Meyers C."/>
            <person name="Nakajima M."/>
            <person name="Narusaka M."/>
            <person name="Seki M."/>
            <person name="Sakurai T."/>
            <person name="Satou M."/>
            <person name="Tamse R."/>
            <person name="Vaysberg M."/>
            <person name="Wallender E.K."/>
            <person name="Wong C."/>
            <person name="Yamamura Y."/>
            <person name="Yuan S."/>
            <person name="Shinozaki K."/>
            <person name="Davis R.W."/>
            <person name="Theologis A."/>
            <person name="Ecker J.R."/>
        </authorList>
    </citation>
    <scope>NUCLEOTIDE SEQUENCE [LARGE SCALE MRNA]</scope>
    <source>
        <strain>cv. Columbia</strain>
    </source>
</reference>
<name>Y1745_ARATH</name>
<evidence type="ECO:0000255" key="1">
    <source>
        <dbReference type="PROSITE-ProRule" id="PRU00162"/>
    </source>
</evidence>
<evidence type="ECO:0000256" key="2">
    <source>
        <dbReference type="SAM" id="MobiDB-lite"/>
    </source>
</evidence>
<evidence type="ECO:0000305" key="3"/>
<comment type="alternative products">
    <event type="alternative splicing"/>
    <isoform>
        <id>P59278-1</id>
        <name>1</name>
        <sequence type="displayed"/>
    </isoform>
    <text>A number of isoforms are produced. According to EST sequences.</text>
</comment>
<comment type="sequence caution" evidence="3">
    <conflict type="erroneous gene model prediction">
        <sequence resource="EMBL-CDS" id="AAG50888"/>
    </conflict>
</comment>
<gene>
    <name type="ordered locus">At1g51745</name>
    <name type="ORF">F19C24.5</name>
</gene>
<protein>
    <recommendedName>
        <fullName>Uncharacterized protein At1g51745</fullName>
    </recommendedName>
</protein>
<organism>
    <name type="scientific">Arabidopsis thaliana</name>
    <name type="common">Mouse-ear cress</name>
    <dbReference type="NCBI Taxonomy" id="3702"/>
    <lineage>
        <taxon>Eukaryota</taxon>
        <taxon>Viridiplantae</taxon>
        <taxon>Streptophyta</taxon>
        <taxon>Embryophyta</taxon>
        <taxon>Tracheophyta</taxon>
        <taxon>Spermatophyta</taxon>
        <taxon>Magnoliopsida</taxon>
        <taxon>eudicotyledons</taxon>
        <taxon>Gunneridae</taxon>
        <taxon>Pentapetalae</taxon>
        <taxon>rosids</taxon>
        <taxon>malvids</taxon>
        <taxon>Brassicales</taxon>
        <taxon>Brassicaceae</taxon>
        <taxon>Camelineae</taxon>
        <taxon>Arabidopsis</taxon>
    </lineage>
</organism>
<sequence>MESNDDRNLEAINASVGRLVWVRRRNGSWWPGQTLVHDQVPDNSLVGPKVGTPIKLLGRDDVSVDWYILENSKTVKAFRCGEYDTCIEKAKASSSKKRSGKCTLREDAINNALKIENEHLAKEDDNLCNLSGEEDSKRCLSGKEDEDSGSSDAEETEDDELASAPEQLQSSISSQEMNNVGASKVQSKRRRTPNDSEDDGTEGVKRMRGLEDIGKEQAGGIVEHKQDLDLICAVGLSDSVSNGNTIANGNKVCSPSSLKRNVSECSKRKNRRRQLTKVLESTAMVSVPVTCDQGVSLDCQGIYDSKVSGMESVESMKSVSVVINNNSDSTGVSCEDAYENVVGASHNNKAKDSEISSISVSAEDDSSDRLFDVPLTGEENHSEGFPAACRISSPRKALVTDLTRRCGRNSHNVFVKNEASNGSACTSPPASEPVNCILSGIEKNTSKWQLKGKRNSRQMSKKQEERRNVYGEEANNNSSTPHSTLYEVKIEVKASYTKPRVPLVSRMSELSGKAIVGHPLSVEILEEDYSNGMVMPPVVAKAKSLPKKNGKKQTTEKAKETVVACIPLKVVFSRINEVLKGSARQTQHRALPSAAKT</sequence>
<feature type="chain" id="PRO_0000220597" description="Uncharacterized protein At1g51745">
    <location>
        <begin position="1"/>
        <end position="597"/>
    </location>
</feature>
<feature type="domain" description="PWWP" evidence="1">
    <location>
        <begin position="16"/>
        <end position="78"/>
    </location>
</feature>
<feature type="region of interest" description="Disordered" evidence="2">
    <location>
        <begin position="126"/>
        <end position="210"/>
    </location>
</feature>
<feature type="region of interest" description="Disordered" evidence="2">
    <location>
        <begin position="449"/>
        <end position="482"/>
    </location>
</feature>
<feature type="compositionally biased region" description="Basic and acidic residues" evidence="2">
    <location>
        <begin position="134"/>
        <end position="143"/>
    </location>
</feature>
<feature type="compositionally biased region" description="Acidic residues" evidence="2">
    <location>
        <begin position="144"/>
        <end position="161"/>
    </location>
</feature>
<feature type="compositionally biased region" description="Polar residues" evidence="2">
    <location>
        <begin position="166"/>
        <end position="185"/>
    </location>
</feature>
<feature type="compositionally biased region" description="Basic residues" evidence="2">
    <location>
        <begin position="450"/>
        <end position="460"/>
    </location>
</feature>
<feature type="compositionally biased region" description="Basic and acidic residues" evidence="2">
    <location>
        <begin position="461"/>
        <end position="470"/>
    </location>
</feature>
<feature type="sequence conflict" description="In Ref. 3; AAO22798." evidence="3" ref="3">
    <original>R</original>
    <variation>M</variation>
    <location>
        <position position="268"/>
    </location>
</feature>